<sequence>MAAFGILSYEHRPLKRPRLGPPDVYPQDPKQKEDELTALNVKQGFNNQPAVSGDEHGSAKNVSFNPAKISSNFSSIIAEKLRCNTLPDTGRRKPQVNQKDNFWLVTARSQSAINTWFTDLAGTKPLTQLAKKVPIFSKKEEVFGYLAKYTVPVMRAAWLIKMTCAYYAAISETKVKKRHVDPFMEWTQIITKYLWEQLQKMAEYYRPGPAGSGGCGSTIGPLPHDVEVAIRQWDYTEKLAMFMFQDGMLDRHEFLTWVLECFEKIRPGEDELLKLLLPLLLRYSGEFVQSAYLSRRLAYFCTRRLALQLDGVSSHSSHVISAQSTSTLPTTPAPQPPTSSTPSTPFSDLLMCPQHRPLVFGLSCILQTILLCCPSALVWHYSLTDSRIKTGSPLDHLPIAPSNLPMPEGNSAFTQQVRAKLREIEQQIKERGQAVEVRWSFDKCQEATAGFTIGRVLHTLEVLDSHSFERSDFSNSLDSLCNRIFGLGPSKDGHEISSDDDAVVSLLCEWAVSCKRSGRHRAMVVAKLLEKRQAEIEAERCGESEAADEKGSIASGSLSAPSAPIFQDVLLQFLDTQAPMLTDPRSESERVEFFNLVLLFCELIRHDVFSHNMYTCTLISRGDLAFGAPGPRPPSPFDDPADDPEHKEAEGSSSSKLEDPGLSESMDIDPSSSVLFEDMEKPDFSLFSPTMPCEGKGSPSPEKPDVEKEVKPPPKEKIEGTLGVLYDQPRHVQYATHFPIPQEESCSHECNQRLVVLFGVGKQRDDARHAIKKITKDILKVLNRKGTAETDQLAPIVPLNPGDLTFLGGEDGQKRRRNRPEAFPTAEDIFAKFQHLSHYDQHQVTAQVSRNVLEQITSFALGMSYHLPLVQHVQFIFDLMEYSLSISGLIDFAIQLLNELSVVEAELLLKSSDLVGSYTTSLCLCIVAVLRHYHACLILNQDQMAQVFEGLCGVVKHGMNRSDGSSAERCILAYLYDLYTSCSHLKNKFGELFSDFCSKVKNTIYCNVEPSESNMRWAPEFMIDTLENPAAHTFTYTGLGKSLSENPANRYSFVCNALMHVCVGHHDPDRVNDIAILCAELTGYCKSLSAEWLGVLKALCCSSNNGTCGFNDLLCNVDVSDLSFHDSLATFVAILIARQCLLLEDLIRCAAIPSLLNAACSEQDSEPGARLTCRILLHLFKTPQLNPCQSDGNKPTVGIRSSCDRHLLAASQNRIVDGAVFAVLKAVFVLGDAELKGSGFTVTGGTEELPEEEGGGGSGGRRQGGRNISVETASLDVYAKYVLRSICQQEWVGERCLKSLCEDSNDLQDPVLSSAQAQRLMQLICYPHRLLDNEDGENPQRQRIKRILQNLDQWTMRQSSLELQLMIKQTPNNEMNSLLENIAKATIEVFQQSAETGSSSGSTASNMPSSSKTKPVLSSLERSGVWLVAPLIAKLPTSVQGHVLKAAGEELEKGQHLGSSSRKERDRQKQKSMSLLSQQPFLSLVLTCLKGQDEQREGLLTSLYSQVHQIVNNWRDDQYLDDCKPKQLMHEALKLRLNLVGGMFDTVQRSTQQTTEWAMLLLEIIISGTVDMQSNNELFTTVLDMLSVLINGTLAADMSSISQGSMEENKRAYMNLAKKLQKELGERQSDSLEKVRQLLPLPKQTRDVITCEPQGSLIDTKGNKIAGFDSIFKKEGLQVSTKQKISPWDLFEGLKPSAPLSWGWFGTVRVDRRVARGEEQQRLLLYHTHLRPRPRAYYLEPLPLPPEDEEPPAPTLLEPEKKAPEPPKTDKPGAAPPSTEERKKKSTKGKKRSQPATKTEDYGMGPGRSGPYGVTVPPDLLHHPNPGSITHLNYRQGSIGLYTQNQPLPAGGPRVDPYRPVRLPMQKLPTRPTYPGVLPTTMTGVMGLEPSSYKTSVYRQQQPAVPQGQRLRQQLQQSQGMLGQSSVHQMTPSSSYGLQTSQGYTPYVSHVGLQQHTGPAGTMVPPSYSSQPYQSTHPSTNPTLVDPTRHLQQRPSGYVHQQAPTYGHGLTSTQRFSHQTLQQTPMISTMTPMSAQGVQAGVRSTAILPEQQQQQQQQQQQQQQQQQQQQQQQQQQYHIRQQQQQQILRQQQQQQQQQQQQQQQQQQQQQQQQQQHQQQQQQQAAPPQPQPQSQPQFQRQGLQQTQQQQQTAALVRQLQQQLSNTQPQPSTNIFGRY</sequence>
<organism>
    <name type="scientific">Homo sapiens</name>
    <name type="common">Human</name>
    <dbReference type="NCBI Taxonomy" id="9606"/>
    <lineage>
        <taxon>Eukaryota</taxon>
        <taxon>Metazoa</taxon>
        <taxon>Chordata</taxon>
        <taxon>Craniata</taxon>
        <taxon>Vertebrata</taxon>
        <taxon>Euteleostomi</taxon>
        <taxon>Mammalia</taxon>
        <taxon>Eutheria</taxon>
        <taxon>Euarchontoglires</taxon>
        <taxon>Primates</taxon>
        <taxon>Haplorrhini</taxon>
        <taxon>Catarrhini</taxon>
        <taxon>Hominidae</taxon>
        <taxon>Homo</taxon>
    </lineage>
</organism>
<comment type="function">
    <text evidence="8 9 10">Component of the Mediator complex, a coactivator involved in the regulated transcription of nearly all RNA polymerase II-dependent genes. Mediator functions as a bridge to convey information from gene-specific regulatory proteins to the basal RNA polymerase II transcription machinery. Mediator is recruited to promoters by direct interactions with regulatory proteins and serves as a scaffold for the assembly of a functional pre-initiation complex with RNA polymerase II and the general transcription factors. This subunit may specifically regulate transcription of targets of the Wnt signaling pathway and SHH signaling pathway.</text>
</comment>
<comment type="subunit">
    <text evidence="3 4 5 6 7 8 9 10">Component of the Mediator complex, which is composed of MED1, MED4, MED6, MED7, MED8, MED9, MED10, MED11, MED12, MED13, MED13L, MED14, MED15, MED16, MED17, MED18, MED19, MED20, MED21, MED22, MED23, MED24, MED25, MED26, MED27, MED29, MED30, MED31, CCNC, CDK8 and CDC2L6/CDK11. The MED12, MED13, CCNC and CDK8 subunits form a distinct module termed the CDK8 module. Mediator containing the CDK8 module is less active than Mediator lacking this module in supporting transcriptional activation. Individual preparations of the Mediator complex lacking one or more distinct subunits have been variously termed ARC, CRSP, DRIP, PC2, SMCC and TRAP. Also interacts with CTNNB1 and GLI3.</text>
</comment>
<comment type="interaction">
    <interactant intactId="EBI-394357">
        <id>Q93074</id>
    </interactant>
    <interactant intactId="EBI-74648">
        <id>P51693</id>
        <label>APLP1</label>
    </interactant>
    <organismsDiffer>false</organismsDiffer>
    <experiments>2</experiments>
</comment>
<comment type="interaction">
    <interactant intactId="EBI-394357">
        <id>Q93074</id>
    </interactant>
    <interactant intactId="EBI-79306">
        <id>Q06481</id>
        <label>APLP2</label>
    </interactant>
    <organismsDiffer>false</organismsDiffer>
    <experiments>2</experiments>
</comment>
<comment type="interaction">
    <interactant intactId="EBI-394357">
        <id>Q93074</id>
    </interactant>
    <interactant intactId="EBI-77613">
        <id>P05067</id>
        <label>APP</label>
    </interactant>
    <organismsDiffer>false</organismsDiffer>
    <experiments>2</experiments>
</comment>
<comment type="interaction">
    <interactant intactId="EBI-394357">
        <id>Q93074</id>
    </interactant>
    <interactant intactId="EBI-394607">
        <id>Q9NPJ6</id>
        <label>MED4</label>
    </interactant>
    <organismsDiffer>false</organismsDiffer>
    <experiments>12</experiments>
</comment>
<comment type="interaction">
    <interactant intactId="EBI-394357">
        <id>Q93074</id>
    </interactant>
    <interactant intactId="EBI-296151">
        <id>P37173</id>
        <label>TGFBR2</label>
    </interactant>
    <organismsDiffer>false</organismsDiffer>
    <experiments>3</experiments>
</comment>
<comment type="subcellular location">
    <subcellularLocation>
        <location evidence="20">Nucleus</location>
    </subcellularLocation>
</comment>
<comment type="alternative products">
    <event type="alternative splicing"/>
    <isoform>
        <id>Q93074-1</id>
        <name>1</name>
        <sequence type="displayed"/>
    </isoform>
    <isoform>
        <id>Q93074-2</id>
        <name>2</name>
        <sequence type="described" ref="VSP_035520"/>
    </isoform>
    <isoform>
        <id>Q93074-3</id>
        <name>3</name>
        <sequence type="described" ref="VSP_035521"/>
    </isoform>
</comment>
<comment type="tissue specificity">
    <text evidence="3">Ubiquitous.</text>
</comment>
<comment type="disease" evidence="11">
    <disease id="DI-02095">
        <name>Opitz-Kaveggia syndrome</name>
        <acronym>OKS</acronym>
        <description>X-linked disorder characterized by intellectual disability, relative macrocephaly, hypotonia and constipation.</description>
        <dbReference type="MIM" id="305450"/>
    </disease>
    <text>The disease is caused by variants affecting the gene represented in this entry.</text>
</comment>
<comment type="disease" evidence="12">
    <disease id="DI-01917">
        <name>Intellectual developmental disorder, X-linked, syndromic, Lujan-Fryns type</name>
        <acronym>MRXSLF</acronym>
        <description>A disorder characterized by tall stature with asthenic habitus, macrocephaly, a tall narrow face, maxillary hypoplasia, a high narrow palate with dental crowding, a small or receding chin, long hands with hyperextensible digits, hypernasal speech, hypotonia, mild-to-moderate intellectual disability, behavioral aberrations and dysgenesis of the corpus callosum.</description>
        <dbReference type="MIM" id="309520"/>
    </disease>
    <text>The disease is caused by variants affecting the gene represented in this entry.</text>
</comment>
<comment type="disease" evidence="13">
    <disease id="DI-03741">
        <name>Ohdo syndrome, X-linked</name>
        <acronym>OHDOX</acronym>
        <description>A syndrome characterized by intellectual disability, feeding problems, and distinctive facial appearance with coarse facial features, severe blepharophimosis, ptosis, a bulbous nose, micrognathia and a small mouth. Dental hypoplasia and deafness can be considered as common manifestations of the syndrome. Male patients show cryptorchidism and scrotal hypoplasia.</description>
        <dbReference type="MIM" id="300895"/>
    </disease>
    <text>The disease is caused by variants affecting the gene represented in this entry.</text>
</comment>
<comment type="disease" evidence="15">
    <disease id="DI-06282">
        <name>Hardikar syndrome</name>
        <acronym>HDKR</acronym>
        <description>An X-linked dominant, multiple congenital anomaly syndrome characterized by foregut malformations, intestinal malrotation, liver and biliary tract disease, genitourinary abnormalities, facial clefting, and pigmentary retinopathy. Some patients may have congenital cardiac defects or vascular abnormalities, including aortic coarctation and carotid/intracranial aneurysms. Neurodevelopment and cognition is normal.</description>
        <dbReference type="MIM" id="301068"/>
    </disease>
    <text>The disease is caused by variants affecting the gene represented in this entry.</text>
</comment>
<comment type="similarity">
    <text evidence="20">Belongs to the Mediator complex subunit 12 family.</text>
</comment>
<comment type="sequence caution" evidence="20">
    <conflict type="erroneous initiation">
        <sequence resource="EMBL-CDS" id="AAD22033"/>
    </conflict>
</comment>
<proteinExistence type="evidence at protein level"/>
<name>MED12_HUMAN</name>
<protein>
    <recommendedName>
        <fullName>Mediator of RNA polymerase II transcription subunit 12</fullName>
    </recommendedName>
    <alternativeName>
        <fullName>Activator-recruited cofactor 240 kDa component</fullName>
        <shortName>ARC240</shortName>
    </alternativeName>
    <alternativeName>
        <fullName>CAG repeat protein 45</fullName>
    </alternativeName>
    <alternativeName>
        <fullName>Mediator complex subunit 12</fullName>
    </alternativeName>
    <alternativeName>
        <fullName>OPA-containing protein</fullName>
    </alternativeName>
    <alternativeName>
        <fullName>Thyroid hormone receptor-associated protein complex 230 kDa component</fullName>
        <shortName>Trap230</shortName>
    </alternativeName>
    <alternativeName>
        <fullName>Trinucleotide repeat-containing gene 11 protein</fullName>
    </alternativeName>
</protein>
<accession>Q93074</accession>
<accession>O15410</accession>
<accession>O75557</accession>
<accession>Q9UHV6</accession>
<accession>Q9UND7</accession>
<evidence type="ECO:0000250" key="1">
    <source>
        <dbReference type="UniProtKB" id="A2AGH6"/>
    </source>
</evidence>
<evidence type="ECO:0000256" key="2">
    <source>
        <dbReference type="SAM" id="MobiDB-lite"/>
    </source>
</evidence>
<evidence type="ECO:0000269" key="3">
    <source>
    </source>
</evidence>
<evidence type="ECO:0000269" key="4">
    <source>
    </source>
</evidence>
<evidence type="ECO:0000269" key="5">
    <source>
    </source>
</evidence>
<evidence type="ECO:0000269" key="6">
    <source>
    </source>
</evidence>
<evidence type="ECO:0000269" key="7">
    <source>
    </source>
</evidence>
<evidence type="ECO:0000269" key="8">
    <source>
    </source>
</evidence>
<evidence type="ECO:0000269" key="9">
    <source>
    </source>
</evidence>
<evidence type="ECO:0000269" key="10">
    <source>
    </source>
</evidence>
<evidence type="ECO:0000269" key="11">
    <source>
    </source>
</evidence>
<evidence type="ECO:0000269" key="12">
    <source>
    </source>
</evidence>
<evidence type="ECO:0000269" key="13">
    <source>
    </source>
</evidence>
<evidence type="ECO:0000269" key="14">
    <source>
    </source>
</evidence>
<evidence type="ECO:0000269" key="15">
    <source>
    </source>
</evidence>
<evidence type="ECO:0000269" key="16">
    <source>
    </source>
</evidence>
<evidence type="ECO:0000303" key="17">
    <source>
    </source>
</evidence>
<evidence type="ECO:0000303" key="18">
    <source>
    </source>
</evidence>
<evidence type="ECO:0000303" key="19">
    <source>
    </source>
</evidence>
<evidence type="ECO:0000305" key="20"/>
<evidence type="ECO:0007744" key="21">
    <source>
    </source>
</evidence>
<evidence type="ECO:0007744" key="22">
    <source>
    </source>
</evidence>
<evidence type="ECO:0007744" key="23">
    <source>
    </source>
</evidence>
<evidence type="ECO:0007744" key="24">
    <source>
    </source>
</evidence>
<evidence type="ECO:0007744" key="25">
    <source>
    </source>
</evidence>
<evidence type="ECO:0007744" key="26">
    <source>
    </source>
</evidence>
<evidence type="ECO:0007744" key="27">
    <source>
    </source>
</evidence>
<evidence type="ECO:0007744" key="28">
    <source>
    </source>
</evidence>
<feature type="chain" id="PRO_0000096359" description="Mediator of RNA polymerase II transcription subunit 12">
    <location>
        <begin position="1"/>
        <end position="2177"/>
    </location>
</feature>
<feature type="region of interest" description="Disordered" evidence="2">
    <location>
        <begin position="12"/>
        <end position="35"/>
    </location>
</feature>
<feature type="region of interest" description="Disordered" evidence="2">
    <location>
        <begin position="323"/>
        <end position="344"/>
    </location>
</feature>
<feature type="region of interest" description="Disordered" evidence="2">
    <location>
        <begin position="627"/>
        <end position="669"/>
    </location>
</feature>
<feature type="region of interest" description="Disordered" evidence="2">
    <location>
        <begin position="690"/>
        <end position="717"/>
    </location>
</feature>
<feature type="region of interest" description="Disordered" evidence="2">
    <location>
        <begin position="1241"/>
        <end position="1266"/>
    </location>
</feature>
<feature type="region of interest" description="Disordered" evidence="2">
    <location>
        <begin position="1394"/>
        <end position="1415"/>
    </location>
</feature>
<feature type="region of interest" description="Disordered" evidence="2">
    <location>
        <begin position="1450"/>
        <end position="1474"/>
    </location>
</feature>
<feature type="region of interest" description="Interaction with CTNNB1 and GLI3" evidence="10">
    <location>
        <begin position="1616"/>
        <end position="2051"/>
    </location>
</feature>
<feature type="region of interest" description="Disordered" evidence="2">
    <location>
        <begin position="1738"/>
        <end position="1829"/>
    </location>
</feature>
<feature type="region of interest" description="Disordered" evidence="2">
    <location>
        <begin position="1919"/>
        <end position="1938"/>
    </location>
</feature>
<feature type="region of interest" description="Disordered" evidence="2">
    <location>
        <begin position="1967"/>
        <end position="1989"/>
    </location>
</feature>
<feature type="region of interest" description="Disordered" evidence="2">
    <location>
        <begin position="2115"/>
        <end position="2149"/>
    </location>
</feature>
<feature type="region of interest" description="Disordered" evidence="2">
    <location>
        <begin position="2158"/>
        <end position="2177"/>
    </location>
</feature>
<feature type="compositionally biased region" description="Basic and acidic residues" evidence="2">
    <location>
        <begin position="702"/>
        <end position="717"/>
    </location>
</feature>
<feature type="compositionally biased region" description="Low complexity" evidence="2">
    <location>
        <begin position="1394"/>
        <end position="1411"/>
    </location>
</feature>
<feature type="compositionally biased region" description="Basic and acidic residues" evidence="2">
    <location>
        <begin position="1450"/>
        <end position="1469"/>
    </location>
</feature>
<feature type="compositionally biased region" description="Basic and acidic residues" evidence="2">
    <location>
        <begin position="1758"/>
        <end position="1771"/>
    </location>
</feature>
<feature type="compositionally biased region" description="Basic residues" evidence="2">
    <location>
        <begin position="1784"/>
        <end position="1793"/>
    </location>
</feature>
<feature type="compositionally biased region" description="Polar residues" evidence="2">
    <location>
        <begin position="1927"/>
        <end position="1938"/>
    </location>
</feature>
<feature type="compositionally biased region" description="Low complexity" evidence="2">
    <location>
        <begin position="1967"/>
        <end position="1980"/>
    </location>
</feature>
<feature type="compositionally biased region" description="Low complexity" evidence="2">
    <location>
        <begin position="2115"/>
        <end position="2125"/>
    </location>
</feature>
<feature type="compositionally biased region" description="Low complexity" evidence="2">
    <location>
        <begin position="2133"/>
        <end position="2149"/>
    </location>
</feature>
<feature type="compositionally biased region" description="Low complexity" evidence="2">
    <location>
        <begin position="2158"/>
        <end position="2171"/>
    </location>
</feature>
<feature type="modified residue" description="N6-acetyllysine" evidence="1">
    <location>
        <position position="80"/>
    </location>
</feature>
<feature type="modified residue" description="Phosphotyrosine" evidence="22">
    <location>
        <position position="166"/>
    </location>
</feature>
<feature type="modified residue" description="Phosphoserine" evidence="21 23 24 25 26 28">
    <location>
        <position position="635"/>
    </location>
</feature>
<feature type="modified residue" description="Phosphoserine" evidence="28">
    <location>
        <position position="665"/>
    </location>
</feature>
<feature type="modified residue" description="Phosphoserine" evidence="26 28">
    <location>
        <position position="698"/>
    </location>
</feature>
<feature type="modified residue" description="Phosphoserine" evidence="26">
    <location>
        <position position="700"/>
    </location>
</feature>
<feature type="modified residue" description="Phosphoserine" evidence="23 24">
    <location>
        <position position="1258"/>
    </location>
</feature>
<feature type="modified residue" description="Phosphoserine" evidence="24">
    <location>
        <position position="1269"/>
    </location>
</feature>
<feature type="modified residue" description="N6-acetyllysine" evidence="1">
    <location>
        <position position="1798"/>
    </location>
</feature>
<feature type="modified residue" description="Asymmetric dimethylarginine; alternate" evidence="1">
    <location>
        <position position="1899"/>
    </location>
</feature>
<feature type="modified residue" description="Omega-N-methylarginine; alternate" evidence="1">
    <location>
        <position position="1899"/>
    </location>
</feature>
<feature type="modified residue" description="Omega-N-methylarginine" evidence="1">
    <location>
        <position position="1910"/>
    </location>
</feature>
<feature type="modified residue" description="Asymmetric dimethylarginine" evidence="27">
    <location>
        <position position="1994"/>
    </location>
</feature>
<feature type="modified residue" description="Asymmetric dimethylarginine" evidence="27">
    <location>
        <position position="2015"/>
    </location>
</feature>
<feature type="splice variant" id="VSP_035520" description="In isoform 2." evidence="18">
    <original>Q</original>
    <variation>QAKI</variation>
    <location>
        <position position="1916"/>
    </location>
</feature>
<feature type="splice variant" id="VSP_035521" description="In isoform 3." evidence="17 19">
    <location>
        <position position="1916"/>
    </location>
</feature>
<feature type="sequence variant" id="VAR_086496" description="In HDKR." evidence="15">
    <location>
        <begin position="108"/>
        <end position="2177"/>
    </location>
</feature>
<feature type="sequence variant" id="VAR_033112" description="In OKS; dbSNP:rs80338758." evidence="11">
    <original>R</original>
    <variation>W</variation>
    <location>
        <position position="961"/>
    </location>
</feature>
<feature type="sequence variant" id="VAR_037534" description="In MRXSLF; dbSNP:rs80338759." evidence="12">
    <original>N</original>
    <variation>S</variation>
    <location>
        <position position="1007"/>
    </location>
</feature>
<feature type="sequence variant" id="VAR_069770" description="In OHDOX; dbSNP:rs387907360." evidence="13">
    <original>R</original>
    <variation>H</variation>
    <location>
        <position position="1148"/>
    </location>
</feature>
<feature type="sequence variant" id="VAR_069771" description="In OHDOX; dbSNP:rs387907361." evidence="13">
    <original>S</original>
    <variation>P</variation>
    <location>
        <position position="1165"/>
    </location>
</feature>
<feature type="sequence variant" id="VAR_046672" description="In dbSNP:rs1139013." evidence="3 16">
    <original>Q</original>
    <variation>R</variation>
    <location>
        <position position="1392"/>
    </location>
</feature>
<feature type="sequence variant" id="VAR_086497" description="In HDKR." evidence="15">
    <location>
        <begin position="1704"/>
        <end position="2177"/>
    </location>
</feature>
<feature type="sequence variant" id="VAR_069772" description="In OHDOX; dbSNP:rs387907362." evidence="13">
    <original>H</original>
    <variation>N</variation>
    <location>
        <position position="1729"/>
    </location>
</feature>
<feature type="sequence variant" id="VAR_086498" description="In HDKR." evidence="15">
    <location>
        <begin position="1874"/>
        <end position="2177"/>
    </location>
</feature>
<feature type="sequence variant" id="VAR_074018" description="Found in a family with X-linked intellectual disability; uncertain significance; dbSNP:rs879255528." evidence="14">
    <original>Q</original>
    <variation>H</variation>
    <location>
        <position position="1974"/>
    </location>
</feature>
<feature type="sequence conflict" description="In Ref. 1; AAD22033." evidence="20" ref="1">
    <original>R</original>
    <variation>RPR</variation>
    <location>
        <position position="16"/>
    </location>
</feature>
<feature type="sequence conflict" description="In Ref. 6; AA sequence." evidence="20" ref="6">
    <location>
        <position position="397"/>
    </location>
</feature>
<feature type="sequence conflict" description="In Ref. 5; AAD44162." evidence="20" ref="5">
    <original>E</original>
    <variation>V</variation>
    <location>
        <position position="1166"/>
    </location>
</feature>
<gene>
    <name type="primary">MED12</name>
    <name type="synonym">ARC240</name>
    <name type="synonym">CAGH45</name>
    <name type="synonym">HOPA</name>
    <name type="synonym">KIAA0192</name>
    <name type="synonym">TNRC11</name>
    <name type="synonym">TRAP230</name>
</gene>
<reference key="1">
    <citation type="journal article" date="1999" name="Mol. Cell">
        <title>Identity between TRAP and SMCC complexes indicates novel pathways for the function of nuclear receptors and diverse mammalian activators.</title>
        <authorList>
            <person name="Ito M."/>
            <person name="Yuan C.-X."/>
            <person name="Malik S."/>
            <person name="Gu W."/>
            <person name="Fondell J.D."/>
            <person name="Yamamura S."/>
            <person name="Fu Z.-Y."/>
            <person name="Zhang X."/>
            <person name="Qin J."/>
            <person name="Roeder R.G."/>
        </authorList>
    </citation>
    <scope>NUCLEOTIDE SEQUENCE [MRNA] (ISOFORM 1)</scope>
    <scope>PROTEIN SEQUENCE OF 788-802 (ISOFORMS 1/2/3)</scope>
    <scope>IDENTIFICATION IN THE TRAP COMPLEX</scope>
    <scope>TISSUE SPECIFICITY</scope>
    <scope>VARIANT ARG-1392</scope>
    <source>
        <tissue>Cervix carcinoma</tissue>
    </source>
</reference>
<reference key="2">
    <citation type="journal article" date="2005" name="Nature">
        <title>The DNA sequence of the human X chromosome.</title>
        <authorList>
            <person name="Ross M.T."/>
            <person name="Grafham D.V."/>
            <person name="Coffey A.J."/>
            <person name="Scherer S."/>
            <person name="McLay K."/>
            <person name="Muzny D."/>
            <person name="Platzer M."/>
            <person name="Howell G.R."/>
            <person name="Burrows C."/>
            <person name="Bird C.P."/>
            <person name="Frankish A."/>
            <person name="Lovell F.L."/>
            <person name="Howe K.L."/>
            <person name="Ashurst J.L."/>
            <person name="Fulton R.S."/>
            <person name="Sudbrak R."/>
            <person name="Wen G."/>
            <person name="Jones M.C."/>
            <person name="Hurles M.E."/>
            <person name="Andrews T.D."/>
            <person name="Scott C.E."/>
            <person name="Searle S."/>
            <person name="Ramser J."/>
            <person name="Whittaker A."/>
            <person name="Deadman R."/>
            <person name="Carter N.P."/>
            <person name="Hunt S.E."/>
            <person name="Chen R."/>
            <person name="Cree A."/>
            <person name="Gunaratne P."/>
            <person name="Havlak P."/>
            <person name="Hodgson A."/>
            <person name="Metzker M.L."/>
            <person name="Richards S."/>
            <person name="Scott G."/>
            <person name="Steffen D."/>
            <person name="Sodergren E."/>
            <person name="Wheeler D.A."/>
            <person name="Worley K.C."/>
            <person name="Ainscough R."/>
            <person name="Ambrose K.D."/>
            <person name="Ansari-Lari M.A."/>
            <person name="Aradhya S."/>
            <person name="Ashwell R.I."/>
            <person name="Babbage A.K."/>
            <person name="Bagguley C.L."/>
            <person name="Ballabio A."/>
            <person name="Banerjee R."/>
            <person name="Barker G.E."/>
            <person name="Barlow K.F."/>
            <person name="Barrett I.P."/>
            <person name="Bates K.N."/>
            <person name="Beare D.M."/>
            <person name="Beasley H."/>
            <person name="Beasley O."/>
            <person name="Beck A."/>
            <person name="Bethel G."/>
            <person name="Blechschmidt K."/>
            <person name="Brady N."/>
            <person name="Bray-Allen S."/>
            <person name="Bridgeman A.M."/>
            <person name="Brown A.J."/>
            <person name="Brown M.J."/>
            <person name="Bonnin D."/>
            <person name="Bruford E.A."/>
            <person name="Buhay C."/>
            <person name="Burch P."/>
            <person name="Burford D."/>
            <person name="Burgess J."/>
            <person name="Burrill W."/>
            <person name="Burton J."/>
            <person name="Bye J.M."/>
            <person name="Carder C."/>
            <person name="Carrel L."/>
            <person name="Chako J."/>
            <person name="Chapman J.C."/>
            <person name="Chavez D."/>
            <person name="Chen E."/>
            <person name="Chen G."/>
            <person name="Chen Y."/>
            <person name="Chen Z."/>
            <person name="Chinault C."/>
            <person name="Ciccodicola A."/>
            <person name="Clark S.Y."/>
            <person name="Clarke G."/>
            <person name="Clee C.M."/>
            <person name="Clegg S."/>
            <person name="Clerc-Blankenburg K."/>
            <person name="Clifford K."/>
            <person name="Cobley V."/>
            <person name="Cole C.G."/>
            <person name="Conquer J.S."/>
            <person name="Corby N."/>
            <person name="Connor R.E."/>
            <person name="David R."/>
            <person name="Davies J."/>
            <person name="Davis C."/>
            <person name="Davis J."/>
            <person name="Delgado O."/>
            <person name="Deshazo D."/>
            <person name="Dhami P."/>
            <person name="Ding Y."/>
            <person name="Dinh H."/>
            <person name="Dodsworth S."/>
            <person name="Draper H."/>
            <person name="Dugan-Rocha S."/>
            <person name="Dunham A."/>
            <person name="Dunn M."/>
            <person name="Durbin K.J."/>
            <person name="Dutta I."/>
            <person name="Eades T."/>
            <person name="Ellwood M."/>
            <person name="Emery-Cohen A."/>
            <person name="Errington H."/>
            <person name="Evans K.L."/>
            <person name="Faulkner L."/>
            <person name="Francis F."/>
            <person name="Frankland J."/>
            <person name="Fraser A.E."/>
            <person name="Galgoczy P."/>
            <person name="Gilbert J."/>
            <person name="Gill R."/>
            <person name="Gloeckner G."/>
            <person name="Gregory S.G."/>
            <person name="Gribble S."/>
            <person name="Griffiths C."/>
            <person name="Grocock R."/>
            <person name="Gu Y."/>
            <person name="Gwilliam R."/>
            <person name="Hamilton C."/>
            <person name="Hart E.A."/>
            <person name="Hawes A."/>
            <person name="Heath P.D."/>
            <person name="Heitmann K."/>
            <person name="Hennig S."/>
            <person name="Hernandez J."/>
            <person name="Hinzmann B."/>
            <person name="Ho S."/>
            <person name="Hoffs M."/>
            <person name="Howden P.J."/>
            <person name="Huckle E.J."/>
            <person name="Hume J."/>
            <person name="Hunt P.J."/>
            <person name="Hunt A.R."/>
            <person name="Isherwood J."/>
            <person name="Jacob L."/>
            <person name="Johnson D."/>
            <person name="Jones S."/>
            <person name="de Jong P.J."/>
            <person name="Joseph S.S."/>
            <person name="Keenan S."/>
            <person name="Kelly S."/>
            <person name="Kershaw J.K."/>
            <person name="Khan Z."/>
            <person name="Kioschis P."/>
            <person name="Klages S."/>
            <person name="Knights A.J."/>
            <person name="Kosiura A."/>
            <person name="Kovar-Smith C."/>
            <person name="Laird G.K."/>
            <person name="Langford C."/>
            <person name="Lawlor S."/>
            <person name="Leversha M."/>
            <person name="Lewis L."/>
            <person name="Liu W."/>
            <person name="Lloyd C."/>
            <person name="Lloyd D.M."/>
            <person name="Loulseged H."/>
            <person name="Loveland J.E."/>
            <person name="Lovell J.D."/>
            <person name="Lozado R."/>
            <person name="Lu J."/>
            <person name="Lyne R."/>
            <person name="Ma J."/>
            <person name="Maheshwari M."/>
            <person name="Matthews L.H."/>
            <person name="McDowall J."/>
            <person name="McLaren S."/>
            <person name="McMurray A."/>
            <person name="Meidl P."/>
            <person name="Meitinger T."/>
            <person name="Milne S."/>
            <person name="Miner G."/>
            <person name="Mistry S.L."/>
            <person name="Morgan M."/>
            <person name="Morris S."/>
            <person name="Mueller I."/>
            <person name="Mullikin J.C."/>
            <person name="Nguyen N."/>
            <person name="Nordsiek G."/>
            <person name="Nyakatura G."/>
            <person name="O'dell C.N."/>
            <person name="Okwuonu G."/>
            <person name="Palmer S."/>
            <person name="Pandian R."/>
            <person name="Parker D."/>
            <person name="Parrish J."/>
            <person name="Pasternak S."/>
            <person name="Patel D."/>
            <person name="Pearce A.V."/>
            <person name="Pearson D.M."/>
            <person name="Pelan S.E."/>
            <person name="Perez L."/>
            <person name="Porter K.M."/>
            <person name="Ramsey Y."/>
            <person name="Reichwald K."/>
            <person name="Rhodes S."/>
            <person name="Ridler K.A."/>
            <person name="Schlessinger D."/>
            <person name="Schueler M.G."/>
            <person name="Sehra H.K."/>
            <person name="Shaw-Smith C."/>
            <person name="Shen H."/>
            <person name="Sheridan E.M."/>
            <person name="Shownkeen R."/>
            <person name="Skuce C.D."/>
            <person name="Smith M.L."/>
            <person name="Sotheran E.C."/>
            <person name="Steingruber H.E."/>
            <person name="Steward C.A."/>
            <person name="Storey R."/>
            <person name="Swann R.M."/>
            <person name="Swarbreck D."/>
            <person name="Tabor P.E."/>
            <person name="Taudien S."/>
            <person name="Taylor T."/>
            <person name="Teague B."/>
            <person name="Thomas K."/>
            <person name="Thorpe A."/>
            <person name="Timms K."/>
            <person name="Tracey A."/>
            <person name="Trevanion S."/>
            <person name="Tromans A.C."/>
            <person name="d'Urso M."/>
            <person name="Verduzco D."/>
            <person name="Villasana D."/>
            <person name="Waldron L."/>
            <person name="Wall M."/>
            <person name="Wang Q."/>
            <person name="Warren J."/>
            <person name="Warry G.L."/>
            <person name="Wei X."/>
            <person name="West A."/>
            <person name="Whitehead S.L."/>
            <person name="Whiteley M.N."/>
            <person name="Wilkinson J.E."/>
            <person name="Willey D.L."/>
            <person name="Williams G."/>
            <person name="Williams L."/>
            <person name="Williamson A."/>
            <person name="Williamson H."/>
            <person name="Wilming L."/>
            <person name="Woodmansey R.L."/>
            <person name="Wray P.W."/>
            <person name="Yen J."/>
            <person name="Zhang J."/>
            <person name="Zhou J."/>
            <person name="Zoghbi H."/>
            <person name="Zorilla S."/>
            <person name="Buck D."/>
            <person name="Reinhardt R."/>
            <person name="Poustka A."/>
            <person name="Rosenthal A."/>
            <person name="Lehrach H."/>
            <person name="Meindl A."/>
            <person name="Minx P.J."/>
            <person name="Hillier L.W."/>
            <person name="Willard H.F."/>
            <person name="Wilson R.K."/>
            <person name="Waterston R.H."/>
            <person name="Rice C.M."/>
            <person name="Vaudin M."/>
            <person name="Coulson A."/>
            <person name="Nelson D.L."/>
            <person name="Weinstock G."/>
            <person name="Sulston J.E."/>
            <person name="Durbin R.M."/>
            <person name="Hubbard T."/>
            <person name="Gibbs R.A."/>
            <person name="Beck S."/>
            <person name="Rogers J."/>
            <person name="Bentley D.R."/>
        </authorList>
    </citation>
    <scope>NUCLEOTIDE SEQUENCE [LARGE SCALE GENOMIC DNA]</scope>
</reference>
<reference key="3">
    <citation type="journal article" date="1996" name="DNA Res.">
        <title>Prediction of the coding sequences of unidentified human genes. V. The coding sequences of 40 new genes (KIAA0161-KIAA0200) deduced by analysis of cDNA clones from human cell line KG-1.</title>
        <authorList>
            <person name="Nagase T."/>
            <person name="Seki N."/>
            <person name="Ishikawa K."/>
            <person name="Tanaka A."/>
            <person name="Nomura N."/>
        </authorList>
    </citation>
    <scope>NUCLEOTIDE SEQUENCE [LARGE SCALE MRNA] OF 54-2177 (ISOFORM 1)</scope>
    <scope>VARIANT ARG-1392</scope>
    <source>
        <tissue>Bone marrow</tissue>
    </source>
</reference>
<reference key="4">
    <citation type="journal article" date="1998" name="Mol. Psychiatry">
        <title>Association of an X-chromosome dodecamer insertional variant allele with mental retardation.</title>
        <authorList>
            <person name="Philibert R.A."/>
            <person name="King B.H."/>
            <person name="Cook E.H."/>
            <person name="Lee Y.-H."/>
            <person name="Stubblefield B."/>
            <person name="Damschroder-Williams P."/>
            <person name="Dea C."/>
            <person name="Palotie A."/>
            <person name="Tengstrom C."/>
            <person name="Martin B.M."/>
            <person name="Ginns E.I."/>
        </authorList>
    </citation>
    <scope>NUCLEOTIDE SEQUENCE [MRNA] OF 154-2177 (ISOFORM 3)</scope>
</reference>
<reference key="5">
    <citation type="journal article" date="1999" name="Hum. Genet.">
        <title>The genomic structure and developmental expression patterns of the human OPA-containing gene (HOPA).</title>
        <authorList>
            <person name="Philibert R.A."/>
            <person name="Winfield S.L."/>
            <person name="Damschroder-Williams P."/>
            <person name="Tengstrom C."/>
            <person name="Martin B.M."/>
            <person name="Ginns E.I."/>
        </authorList>
    </citation>
    <scope>NUCLEOTIDE SEQUENCE [GENOMIC DNA / MRNA] OF 154-2177 (ISOFORM 3)</scope>
</reference>
<reference key="6">
    <citation type="journal article" date="1999" name="Nature">
        <title>Ligand-dependent transcription activation by nuclear receptors requires the DRIP complex.</title>
        <authorList>
            <person name="Rachez C."/>
            <person name="Lemon B.D."/>
            <person name="Suldan Z."/>
            <person name="Bromleigh V."/>
            <person name="Gamble M."/>
            <person name="Naeaer A.M."/>
            <person name="Erdjument-Bromage H."/>
            <person name="Tempst P."/>
            <person name="Freedman L.P."/>
        </authorList>
    </citation>
    <scope>PROTEIN SEQUENCE OF 386-418 (ISOFORMS 1/2/3)</scope>
    <scope>IDENTIFICATION IN THE ARC COMPLEX</scope>
    <source>
        <tissue>Cervix carcinoma</tissue>
    </source>
</reference>
<reference key="7">
    <citation type="journal article" date="1997" name="Hum. Genet.">
        <title>cDNAs with long CAG trinucleotide repeats from human brain.</title>
        <authorList>
            <person name="Margolis R.L."/>
            <person name="Abraham M.R."/>
            <person name="Gatchell S.B."/>
            <person name="Li S.-H."/>
            <person name="Kidwai A.S."/>
            <person name="Breschel T.S."/>
            <person name="Stine O.C."/>
            <person name="Callahan C."/>
            <person name="McInnis M.G."/>
            <person name="Ross C.A."/>
        </authorList>
    </citation>
    <scope>NUCLEOTIDE SEQUENCE [MRNA] OF 1529-2177 (ISOFORM 2)</scope>
    <source>
        <tissue>Brain</tissue>
    </source>
</reference>
<reference key="8">
    <citation type="journal article" date="1999" name="Nature">
        <title>Composite co-activator ARC mediates chromatin-directed transcriptional activation.</title>
        <authorList>
            <person name="Naeaer A.M."/>
            <person name="Beaurang P.A."/>
            <person name="Zhou S."/>
            <person name="Abraham S."/>
            <person name="Solomon W.B."/>
            <person name="Tjian R."/>
        </authorList>
    </citation>
    <scope>PROTEIN SEQUENCE OF 1674-1682 AND 1771-1782 (ISOFORMS 1/2/3)</scope>
    <scope>IDENTIFICATION IN THE ARC COMPLEX</scope>
</reference>
<reference key="9">
    <citation type="journal article" date="2004" name="Mol. Cell">
        <title>A set of consensus mammalian mediator subunits identified by multidimensional protein identification technology.</title>
        <authorList>
            <person name="Sato S."/>
            <person name="Tomomori-Sato C."/>
            <person name="Parmely T.J."/>
            <person name="Florens L."/>
            <person name="Zybailov B."/>
            <person name="Swanson S.K."/>
            <person name="Banks C.A.S."/>
            <person name="Jin J."/>
            <person name="Cai Y."/>
            <person name="Washburn M.P."/>
            <person name="Conaway J.W."/>
            <person name="Conaway R.C."/>
        </authorList>
    </citation>
    <scope>IDENTIFICATION BY MASS SPECTROMETRY</scope>
    <scope>IDENTIFICATION IN THE MEDIATOR COMPLEX</scope>
    <scope>INTERACTION OF THE MEDIATOR COMPLEX WITH RNA POLYMERASE II</scope>
</reference>
<reference key="10">
    <citation type="journal article" date="2005" name="Mol. Cell">
        <title>MED1/TRAP220 exists predominantly in a TRAP/Mediator subpopulation enriched in RNA polymerase II and is required for ER-mediated transcription.</title>
        <authorList>
            <person name="Zhang X."/>
            <person name="Krutchinsky A."/>
            <person name="Fukuda A."/>
            <person name="Chen W."/>
            <person name="Yamamura S."/>
            <person name="Chait B.T."/>
            <person name="Roeder R.G."/>
        </authorList>
    </citation>
    <scope>INTERACTION WITH MED1; MED18; MED21; MED28; MED29 AND MED30</scope>
    <scope>IDENTIFICATION BY MASS SPECTROMETRY</scope>
    <scope>IDENTIFICATION IN THE MEDIATOR COMPLEX</scope>
    <scope>ASSOCIATION OF THE MEDIATOR COMPLEX WITH RNA POLYMERASE II</scope>
</reference>
<reference key="11">
    <citation type="journal article" date="2006" name="Cell">
        <title>Global, in vivo, and site-specific phosphorylation dynamics in signaling networks.</title>
        <authorList>
            <person name="Olsen J.V."/>
            <person name="Blagoev B."/>
            <person name="Gnad F."/>
            <person name="Macek B."/>
            <person name="Kumar C."/>
            <person name="Mortensen P."/>
            <person name="Mann M."/>
        </authorList>
    </citation>
    <scope>PHOSPHORYLATION [LARGE SCALE ANALYSIS] AT SER-635</scope>
    <scope>IDENTIFICATION BY MASS SPECTROMETRY [LARGE SCALE ANALYSIS]</scope>
    <source>
        <tissue>Cervix carcinoma</tissue>
    </source>
</reference>
<reference key="12">
    <citation type="journal article" date="2006" name="J. Biol. Chem.">
        <title>Mediator is a transducer of Wnt/beta-catenin signaling.</title>
        <authorList>
            <person name="Kim S."/>
            <person name="Xu X."/>
            <person name="Hecht A."/>
            <person name="Boyer T.G."/>
        </authorList>
    </citation>
    <scope>FUNCTION</scope>
    <scope>INTERACTION WITH CTNNB1 AND MED30</scope>
</reference>
<reference key="13">
    <citation type="journal article" date="2006" name="J. Biol. Chem.">
        <title>Human Mediator enhances basal transcription by facilitating recruitment of transcription factor IIB during preinitiation complex assembly.</title>
        <authorList>
            <person name="Baek H.J."/>
            <person name="Kang Y.K."/>
            <person name="Roeder R.G."/>
        </authorList>
    </citation>
    <scope>FUNCTION</scope>
    <scope>INTERACTION WITH MED1 AND MED10</scope>
</reference>
<reference key="14">
    <citation type="journal article" date="2006" name="Mol. Cell. Biol.">
        <title>Mediator modulates Gli3-dependent Sonic hedgehog signaling.</title>
        <authorList>
            <person name="Zhou H."/>
            <person name="Kim S."/>
            <person name="Ishii S."/>
            <person name="Boyer T.G."/>
        </authorList>
    </citation>
    <scope>FUNCTION</scope>
    <scope>INTERACTION WITH CDK8; CTNNB1 AND GLI3</scope>
</reference>
<reference key="15">
    <citation type="journal article" date="2008" name="Mol. Cell">
        <title>Kinase-selective enrichment enables quantitative phosphoproteomics of the kinome across the cell cycle.</title>
        <authorList>
            <person name="Daub H."/>
            <person name="Olsen J.V."/>
            <person name="Bairlein M."/>
            <person name="Gnad F."/>
            <person name="Oppermann F.S."/>
            <person name="Korner R."/>
            <person name="Greff Z."/>
            <person name="Keri G."/>
            <person name="Stemmann O."/>
            <person name="Mann M."/>
        </authorList>
    </citation>
    <scope>PHOSPHORYLATION [LARGE SCALE ANALYSIS] AT SER-635 AND SER-1258</scope>
    <scope>IDENTIFICATION BY MASS SPECTROMETRY [LARGE SCALE ANALYSIS]</scope>
    <source>
        <tissue>Cervix carcinoma</tissue>
    </source>
</reference>
<reference key="16">
    <citation type="journal article" date="2008" name="Proc. Natl. Acad. Sci. U.S.A.">
        <title>A quantitative atlas of mitotic phosphorylation.</title>
        <authorList>
            <person name="Dephoure N."/>
            <person name="Zhou C."/>
            <person name="Villen J."/>
            <person name="Beausoleil S.A."/>
            <person name="Bakalarski C.E."/>
            <person name="Elledge S.J."/>
            <person name="Gygi S.P."/>
        </authorList>
    </citation>
    <scope>PHOSPHORYLATION [LARGE SCALE ANALYSIS] AT TYR-166</scope>
    <scope>IDENTIFICATION BY MASS SPECTROMETRY [LARGE SCALE ANALYSIS]</scope>
    <source>
        <tissue>Cervix carcinoma</tissue>
    </source>
</reference>
<reference key="17">
    <citation type="journal article" date="2009" name="Mol. Cell. Proteomics">
        <title>Large-scale proteomics analysis of the human kinome.</title>
        <authorList>
            <person name="Oppermann F.S."/>
            <person name="Gnad F."/>
            <person name="Olsen J.V."/>
            <person name="Hornberger R."/>
            <person name="Greff Z."/>
            <person name="Keri G."/>
            <person name="Mann M."/>
            <person name="Daub H."/>
        </authorList>
    </citation>
    <scope>PHOSPHORYLATION [LARGE SCALE ANALYSIS] AT SER-635; SER-1258 AND SER-1269</scope>
    <scope>IDENTIFICATION BY MASS SPECTROMETRY [LARGE SCALE ANALYSIS]</scope>
</reference>
<reference key="18">
    <citation type="journal article" date="2009" name="Sci. Signal.">
        <title>Quantitative phosphoproteomic analysis of T cell receptor signaling reveals system-wide modulation of protein-protein interactions.</title>
        <authorList>
            <person name="Mayya V."/>
            <person name="Lundgren D.H."/>
            <person name="Hwang S.-I."/>
            <person name="Rezaul K."/>
            <person name="Wu L."/>
            <person name="Eng J.K."/>
            <person name="Rodionov V."/>
            <person name="Han D.K."/>
        </authorList>
    </citation>
    <scope>PHOSPHORYLATION [LARGE SCALE ANALYSIS] AT SER-635</scope>
    <scope>IDENTIFICATION BY MASS SPECTROMETRY [LARGE SCALE ANALYSIS]</scope>
    <source>
        <tissue>Leukemic T-cell</tissue>
    </source>
</reference>
<reference key="19">
    <citation type="journal article" date="2011" name="BMC Syst. Biol.">
        <title>Initial characterization of the human central proteome.</title>
        <authorList>
            <person name="Burkard T.R."/>
            <person name="Planyavsky M."/>
            <person name="Kaupe I."/>
            <person name="Breitwieser F.P."/>
            <person name="Buerckstuemmer T."/>
            <person name="Bennett K.L."/>
            <person name="Superti-Furga G."/>
            <person name="Colinge J."/>
        </authorList>
    </citation>
    <scope>IDENTIFICATION BY MASS SPECTROMETRY [LARGE SCALE ANALYSIS]</scope>
</reference>
<reference key="20">
    <citation type="journal article" date="2013" name="J. Proteome Res.">
        <title>Toward a comprehensive characterization of a human cancer cell phosphoproteome.</title>
        <authorList>
            <person name="Zhou H."/>
            <person name="Di Palma S."/>
            <person name="Preisinger C."/>
            <person name="Peng M."/>
            <person name="Polat A.N."/>
            <person name="Heck A.J."/>
            <person name="Mohammed S."/>
        </authorList>
    </citation>
    <scope>PHOSPHORYLATION [LARGE SCALE ANALYSIS] AT SER-635; SER-698 AND SER-700</scope>
    <scope>IDENTIFICATION BY MASS SPECTROMETRY [LARGE SCALE ANALYSIS]</scope>
    <source>
        <tissue>Cervix carcinoma</tissue>
        <tissue>Erythroleukemia</tissue>
    </source>
</reference>
<reference key="21">
    <citation type="journal article" date="2014" name="J. Proteomics">
        <title>An enzyme assisted RP-RPLC approach for in-depth analysis of human liver phosphoproteome.</title>
        <authorList>
            <person name="Bian Y."/>
            <person name="Song C."/>
            <person name="Cheng K."/>
            <person name="Dong M."/>
            <person name="Wang F."/>
            <person name="Huang J."/>
            <person name="Sun D."/>
            <person name="Wang L."/>
            <person name="Ye M."/>
            <person name="Zou H."/>
        </authorList>
    </citation>
    <scope>PHOSPHORYLATION [LARGE SCALE ANALYSIS] AT SER-635; SER-665 AND SER-698</scope>
    <scope>IDENTIFICATION BY MASS SPECTROMETRY [LARGE SCALE ANALYSIS]</scope>
    <source>
        <tissue>Liver</tissue>
    </source>
</reference>
<reference key="22">
    <citation type="journal article" date="2014" name="Mol. Cell. Proteomics">
        <title>Immunoaffinity enrichment and mass spectrometry analysis of protein methylation.</title>
        <authorList>
            <person name="Guo A."/>
            <person name="Gu H."/>
            <person name="Zhou J."/>
            <person name="Mulhern D."/>
            <person name="Wang Y."/>
            <person name="Lee K.A."/>
            <person name="Yang V."/>
            <person name="Aguiar M."/>
            <person name="Kornhauser J."/>
            <person name="Jia X."/>
            <person name="Ren J."/>
            <person name="Beausoleil S.A."/>
            <person name="Silva J.C."/>
            <person name="Vemulapalli V."/>
            <person name="Bedford M.T."/>
            <person name="Comb M.J."/>
        </authorList>
    </citation>
    <scope>METHYLATION [LARGE SCALE ANALYSIS] AT ARG-1994 AND ARG-2015</scope>
    <scope>IDENTIFICATION BY MASS SPECTROMETRY [LARGE SCALE ANALYSIS]</scope>
    <source>
        <tissue>Colon carcinoma</tissue>
    </source>
</reference>
<reference key="23">
    <citation type="journal article" date="2007" name="J. Med. Genet.">
        <title>The original Lujan syndrome family has a novel missense mutation (p.N1007S) in the MED12 gene.</title>
        <authorList>
            <person name="Schwartz C.E."/>
            <person name="Tarpey P.S."/>
            <person name="Lubs H.A."/>
            <person name="Verloes A."/>
            <person name="May M.M."/>
            <person name="Risheg H."/>
            <person name="Friez M.J."/>
            <person name="Futreal P.A."/>
            <person name="Edkins S."/>
            <person name="Teague J."/>
            <person name="Briault S."/>
            <person name="Skinner C."/>
            <person name="Bauer-Carlin A."/>
            <person name="Simensen R.J."/>
            <person name="Joseph S.M."/>
            <person name="Jones J.R."/>
            <person name="Gecz J."/>
            <person name="Stratton M.R."/>
            <person name="Raymond F.L."/>
            <person name="Stevenson R.E."/>
        </authorList>
    </citation>
    <scope>VARIANT MRXSLF SER-1007</scope>
</reference>
<reference key="24">
    <citation type="journal article" date="2007" name="Nat. Genet.">
        <title>A recurrent mutation in MED12 leading to R961W causes Opitz-Kaveggia syndrome.</title>
        <authorList>
            <person name="Risheg H."/>
            <person name="Graham J.M. Jr."/>
            <person name="Clark R.D."/>
            <person name="Rogers R.C."/>
            <person name="Opitz J.M."/>
            <person name="Moeschler J.B."/>
            <person name="Peiffer A.P."/>
            <person name="May M."/>
            <person name="Joseph S.M."/>
            <person name="Jones J.R."/>
            <person name="Stevenson R.E."/>
            <person name="Schwartz C.E."/>
            <person name="Friez M.J."/>
        </authorList>
    </citation>
    <scope>VARIANT OKS TRP-961</scope>
</reference>
<reference key="25">
    <citation type="journal article" date="2013" name="Am. J. Hum. Genet.">
        <title>Mutations in MED12 cause X-linked Ohdo syndrome.</title>
        <authorList>
            <person name="Vulto-van Silfhout A.T."/>
            <person name="de Vries B.B."/>
            <person name="van Bon B.W."/>
            <person name="Hoischen A."/>
            <person name="Ruiterkamp-Versteeg M."/>
            <person name="Gilissen C."/>
            <person name="Gao F."/>
            <person name="van Zwam M."/>
            <person name="Harteveld C.L."/>
            <person name="van Essen A.J."/>
            <person name="Hamel B.C."/>
            <person name="Kleefstra T."/>
            <person name="Willemsen M.A."/>
            <person name="Yntema H.G."/>
            <person name="van Bokhoven H."/>
            <person name="Brunner H.G."/>
            <person name="Boyer T.G."/>
            <person name="de Brouwer A.P."/>
        </authorList>
    </citation>
    <scope>VARIANTS OHDOX HIS-1148; PRO-1165 AND ASN-1729</scope>
</reference>
<reference key="26">
    <citation type="journal article" date="2015" name="Clin. Case Rep.">
        <title>Nonsyndromic X-linked intellectual deficiency in three brothers with a novel MED12 missense mutation [c.5922G&gt;T (p.Glu1974His)].</title>
        <authorList>
            <person name="Bouazzi H."/>
            <person name="Lesca G."/>
            <person name="Trujillo C."/>
            <person name="Alwasiyah M.K."/>
            <person name="Munnich A."/>
        </authorList>
    </citation>
    <scope>VARIANT HIS-1974</scope>
</reference>
<reference key="27">
    <citation type="journal article" date="2021" name="Genet. Med.">
        <title>De novo loss-of-function variants in X-linked MED12 are associated with Hardikar syndrome in females.</title>
        <authorList>
            <person name="Li D."/>
            <person name="Strong A."/>
            <person name="Shen K.M."/>
            <person name="Cassiman D."/>
            <person name="Van Dyck M."/>
            <person name="Linhares N.D."/>
            <person name="Valadares E.R."/>
            <person name="Wang T."/>
            <person name="Pena S.D.J."/>
            <person name="Jaeken J."/>
            <person name="Vergano S."/>
            <person name="Zackai E."/>
            <person name="Hing A."/>
            <person name="Chow P."/>
            <person name="Ganguly A."/>
            <person name="Scholz T."/>
            <person name="Bierhals T."/>
            <person name="Philipp D."/>
            <person name="Hakonarson H."/>
            <person name="Bhoj E."/>
        </authorList>
    </citation>
    <scope>VARIANTS HDKR 108-ARG--TYR-2177 DEL; 1704-TRP--TYR-2177 DEL AND 1874-TYR--TYR-2177 DEL</scope>
    <scope>INVOLVEMENT IN HDKR</scope>
</reference>
<dbReference type="EMBL" id="AF117755">
    <property type="protein sequence ID" value="AAD22033.1"/>
    <property type="status" value="ALT_INIT"/>
    <property type="molecule type" value="mRNA"/>
</dbReference>
<dbReference type="EMBL" id="AL590764">
    <property type="status" value="NOT_ANNOTATED_CDS"/>
    <property type="molecule type" value="Genomic_DNA"/>
</dbReference>
<dbReference type="EMBL" id="D83783">
    <property type="protein sequence ID" value="BAA12112.1"/>
    <property type="molecule type" value="mRNA"/>
</dbReference>
<dbReference type="EMBL" id="AF071309">
    <property type="protein sequence ID" value="AAC83163.1"/>
    <property type="molecule type" value="mRNA"/>
</dbReference>
<dbReference type="EMBL" id="AF132033">
    <property type="protein sequence ID" value="AAD44162.1"/>
    <property type="molecule type" value="Genomic_DNA"/>
</dbReference>
<dbReference type="EMBL" id="U80742">
    <property type="protein sequence ID" value="AAB91440.1"/>
    <property type="molecule type" value="mRNA"/>
</dbReference>
<dbReference type="CCDS" id="CCDS43970.1">
    <molecule id="Q93074-1"/>
</dbReference>
<dbReference type="RefSeq" id="NP_005111.2">
    <molecule id="Q93074-1"/>
    <property type="nucleotide sequence ID" value="NM_005120.3"/>
</dbReference>
<dbReference type="PDB" id="8TQ2">
    <property type="method" value="EM"/>
    <property type="resolution" value="3.80 A"/>
    <property type="chains" value="C=1-2177"/>
</dbReference>
<dbReference type="PDB" id="8TQC">
    <property type="method" value="EM"/>
    <property type="resolution" value="3.80 A"/>
    <property type="chains" value="C=1-2177"/>
</dbReference>
<dbReference type="PDB" id="8TQW">
    <property type="method" value="EM"/>
    <property type="resolution" value="8.20 A"/>
    <property type="chains" value="c=1-2177"/>
</dbReference>
<dbReference type="PDBsum" id="8TQ2"/>
<dbReference type="PDBsum" id="8TQC"/>
<dbReference type="PDBsum" id="8TQW"/>
<dbReference type="EMDB" id="EMD-41499"/>
<dbReference type="EMDB" id="EMD-41502"/>
<dbReference type="EMDB" id="EMD-41565"/>
<dbReference type="SMR" id="Q93074"/>
<dbReference type="BioGRID" id="115293">
    <property type="interactions" value="181"/>
</dbReference>
<dbReference type="ComplexPortal" id="CPX-3232">
    <property type="entry name" value="CKM complex variant 1"/>
</dbReference>
<dbReference type="ComplexPortal" id="CPX-3263">
    <property type="entry name" value="CKM complex variant 2"/>
</dbReference>
<dbReference type="CORUM" id="Q93074"/>
<dbReference type="DIP" id="DIP-31459N"/>
<dbReference type="FunCoup" id="Q93074">
    <property type="interactions" value="2795"/>
</dbReference>
<dbReference type="IntAct" id="Q93074">
    <property type="interactions" value="88"/>
</dbReference>
<dbReference type="MINT" id="Q93074"/>
<dbReference type="STRING" id="9606.ENSP00000363193"/>
<dbReference type="GlyGen" id="Q93074">
    <property type="glycosylation" value="2 sites, 1 O-linked glycan (1 site)"/>
</dbReference>
<dbReference type="iPTMnet" id="Q93074"/>
<dbReference type="PhosphoSitePlus" id="Q93074"/>
<dbReference type="BioMuta" id="MED12"/>
<dbReference type="DMDM" id="209572775"/>
<dbReference type="jPOST" id="Q93074"/>
<dbReference type="MassIVE" id="Q93074"/>
<dbReference type="PaxDb" id="9606-ENSP00000363193"/>
<dbReference type="PeptideAtlas" id="Q93074"/>
<dbReference type="ProteomicsDB" id="75701">
    <molecule id="Q93074-1"/>
</dbReference>
<dbReference type="ProteomicsDB" id="75702">
    <molecule id="Q93074-2"/>
</dbReference>
<dbReference type="ProteomicsDB" id="75703">
    <molecule id="Q93074-3"/>
</dbReference>
<dbReference type="Pumba" id="Q93074"/>
<dbReference type="Antibodypedia" id="562">
    <property type="antibodies" value="234 antibodies from 32 providers"/>
</dbReference>
<dbReference type="DNASU" id="9968"/>
<dbReference type="Ensembl" id="ENST00000374080.8">
    <molecule id="Q93074-1"/>
    <property type="protein sequence ID" value="ENSP00000363193.3"/>
    <property type="gene ID" value="ENSG00000184634.17"/>
</dbReference>
<dbReference type="Ensembl" id="ENST00000374102.6">
    <molecule id="Q93074-2"/>
    <property type="protein sequence ID" value="ENSP00000363215.2"/>
    <property type="gene ID" value="ENSG00000184634.17"/>
</dbReference>
<dbReference type="Ensembl" id="ENST00000692304.1">
    <molecule id="Q93074-3"/>
    <property type="protein sequence ID" value="ENSP00000508427.1"/>
    <property type="gene ID" value="ENSG00000184634.17"/>
</dbReference>
<dbReference type="GeneID" id="9968"/>
<dbReference type="KEGG" id="hsa:9968"/>
<dbReference type="MANE-Select" id="ENST00000374080.8">
    <property type="protein sequence ID" value="ENSP00000363193.3"/>
    <property type="RefSeq nucleotide sequence ID" value="NM_005120.3"/>
    <property type="RefSeq protein sequence ID" value="NP_005111.2"/>
</dbReference>
<dbReference type="UCSC" id="uc004dyy.4">
    <molecule id="Q93074-1"/>
    <property type="organism name" value="human"/>
</dbReference>
<dbReference type="AGR" id="HGNC:11957"/>
<dbReference type="CTD" id="9968"/>
<dbReference type="DisGeNET" id="9968"/>
<dbReference type="GeneCards" id="MED12"/>
<dbReference type="GeneReviews" id="MED12"/>
<dbReference type="HGNC" id="HGNC:11957">
    <property type="gene designation" value="MED12"/>
</dbReference>
<dbReference type="HPA" id="ENSG00000184634">
    <property type="expression patterns" value="Low tissue specificity"/>
</dbReference>
<dbReference type="MalaCards" id="MED12"/>
<dbReference type="MIM" id="300188">
    <property type="type" value="gene"/>
</dbReference>
<dbReference type="MIM" id="300895">
    <property type="type" value="phenotype"/>
</dbReference>
<dbReference type="MIM" id="301068">
    <property type="type" value="phenotype"/>
</dbReference>
<dbReference type="MIM" id="305450">
    <property type="type" value="phenotype"/>
</dbReference>
<dbReference type="MIM" id="309520">
    <property type="type" value="phenotype"/>
</dbReference>
<dbReference type="neXtProt" id="NX_Q93074"/>
<dbReference type="OpenTargets" id="ENSG00000184634"/>
<dbReference type="Orphanet" id="293707">
    <property type="disease" value="Blepharophimosis-intellectual disability syndrome, MKB type"/>
</dbReference>
<dbReference type="Orphanet" id="93932">
    <property type="disease" value="FG syndrome type 1"/>
</dbReference>
<dbReference type="Orphanet" id="1415">
    <property type="disease" value="Hardikar syndrome"/>
</dbReference>
<dbReference type="Orphanet" id="776">
    <property type="disease" value="Lujan-Fryns syndrome"/>
</dbReference>
<dbReference type="Orphanet" id="777">
    <property type="disease" value="X-linked non-syndromic intellectual disability"/>
</dbReference>
<dbReference type="PharmGKB" id="PA36645"/>
<dbReference type="VEuPathDB" id="HostDB:ENSG00000184634"/>
<dbReference type="eggNOG" id="KOG3598">
    <property type="taxonomic scope" value="Eukaryota"/>
</dbReference>
<dbReference type="GeneTree" id="ENSGT00440000037505"/>
<dbReference type="HOGENOM" id="CLU_000904_1_0_1"/>
<dbReference type="InParanoid" id="Q93074"/>
<dbReference type="OMA" id="YQQSHDK"/>
<dbReference type="OrthoDB" id="20828at2759"/>
<dbReference type="PAN-GO" id="Q93074">
    <property type="GO annotations" value="4 GO annotations based on evolutionary models"/>
</dbReference>
<dbReference type="PhylomeDB" id="Q93074"/>
<dbReference type="TreeFam" id="TF324178"/>
<dbReference type="PathwayCommons" id="Q93074"/>
<dbReference type="Reactome" id="R-HSA-1989781">
    <property type="pathway name" value="PPARA activates gene expression"/>
</dbReference>
<dbReference type="Reactome" id="R-HSA-212436">
    <property type="pathway name" value="Generic Transcription Pathway"/>
</dbReference>
<dbReference type="Reactome" id="R-HSA-381340">
    <property type="pathway name" value="Transcriptional regulation of white adipocyte differentiation"/>
</dbReference>
<dbReference type="Reactome" id="R-HSA-9833110">
    <property type="pathway name" value="RSV-host interactions"/>
</dbReference>
<dbReference type="Reactome" id="R-HSA-9841922">
    <property type="pathway name" value="MLL4 and MLL3 complexes regulate expression of PPARG target genes in adipogenesis and hepatic steatosis"/>
</dbReference>
<dbReference type="SignaLink" id="Q93074"/>
<dbReference type="SIGNOR" id="Q93074"/>
<dbReference type="BioGRID-ORCS" id="9968">
    <property type="hits" value="263 hits in 832 CRISPR screens"/>
</dbReference>
<dbReference type="ChiTaRS" id="MED12">
    <property type="organism name" value="human"/>
</dbReference>
<dbReference type="GeneWiki" id="MED12"/>
<dbReference type="GenomeRNAi" id="9968"/>
<dbReference type="Pharos" id="Q93074">
    <property type="development level" value="Tbio"/>
</dbReference>
<dbReference type="PRO" id="PR:Q93074"/>
<dbReference type="Proteomes" id="UP000005640">
    <property type="component" value="Chromosome X"/>
</dbReference>
<dbReference type="RNAct" id="Q93074">
    <property type="molecule type" value="protein"/>
</dbReference>
<dbReference type="Bgee" id="ENSG00000184634">
    <property type="expression patterns" value="Expressed in right adrenal gland cortex and 199 other cell types or tissues"/>
</dbReference>
<dbReference type="ExpressionAtlas" id="Q93074">
    <property type="expression patterns" value="baseline and differential"/>
</dbReference>
<dbReference type="GO" id="GO:1990508">
    <property type="term" value="C:CKM complex"/>
    <property type="evidence" value="ECO:0000353"/>
    <property type="project" value="ComplexPortal"/>
</dbReference>
<dbReference type="GO" id="GO:0016592">
    <property type="term" value="C:mediator complex"/>
    <property type="evidence" value="ECO:0000314"/>
    <property type="project" value="UniProtKB"/>
</dbReference>
<dbReference type="GO" id="GO:0016020">
    <property type="term" value="C:membrane"/>
    <property type="evidence" value="ECO:0007005"/>
    <property type="project" value="UniProtKB"/>
</dbReference>
<dbReference type="GO" id="GO:0005654">
    <property type="term" value="C:nucleoplasm"/>
    <property type="evidence" value="ECO:0000304"/>
    <property type="project" value="Reactome"/>
</dbReference>
<dbReference type="GO" id="GO:0005634">
    <property type="term" value="C:nucleus"/>
    <property type="evidence" value="ECO:0000314"/>
    <property type="project" value="UniProtKB"/>
</dbReference>
<dbReference type="GO" id="GO:0000151">
    <property type="term" value="C:ubiquitin ligase complex"/>
    <property type="evidence" value="ECO:0007669"/>
    <property type="project" value="Ensembl"/>
</dbReference>
<dbReference type="GO" id="GO:0008013">
    <property type="term" value="F:beta-catenin binding"/>
    <property type="evidence" value="ECO:0007669"/>
    <property type="project" value="InterPro"/>
</dbReference>
<dbReference type="GO" id="GO:0003682">
    <property type="term" value="F:chromatin binding"/>
    <property type="evidence" value="ECO:0007669"/>
    <property type="project" value="Ensembl"/>
</dbReference>
<dbReference type="GO" id="GO:0046966">
    <property type="term" value="F:nuclear thyroid hormone receptor binding"/>
    <property type="evidence" value="ECO:0000314"/>
    <property type="project" value="UniProtKB"/>
</dbReference>
<dbReference type="GO" id="GO:0042809">
    <property type="term" value="F:nuclear vitamin D receptor binding"/>
    <property type="evidence" value="ECO:0000303"/>
    <property type="project" value="UniProtKB"/>
</dbReference>
<dbReference type="GO" id="GO:0000978">
    <property type="term" value="F:RNA polymerase II cis-regulatory region sequence-specific DNA binding"/>
    <property type="evidence" value="ECO:0007669"/>
    <property type="project" value="Ensembl"/>
</dbReference>
<dbReference type="GO" id="GO:0003713">
    <property type="term" value="F:transcription coactivator activity"/>
    <property type="evidence" value="ECO:0000314"/>
    <property type="project" value="UniProtKB"/>
</dbReference>
<dbReference type="GO" id="GO:0003712">
    <property type="term" value="F:transcription coregulator activity"/>
    <property type="evidence" value="ECO:0000314"/>
    <property type="project" value="UniProtKB"/>
</dbReference>
<dbReference type="GO" id="GO:0061630">
    <property type="term" value="F:ubiquitin protein ligase activity"/>
    <property type="evidence" value="ECO:0007669"/>
    <property type="project" value="Ensembl"/>
</dbReference>
<dbReference type="GO" id="GO:0090245">
    <property type="term" value="P:axis elongation involved in somitogenesis"/>
    <property type="evidence" value="ECO:0007669"/>
    <property type="project" value="Ensembl"/>
</dbReference>
<dbReference type="GO" id="GO:1990403">
    <property type="term" value="P:embryonic brain development"/>
    <property type="evidence" value="ECO:0007669"/>
    <property type="project" value="Ensembl"/>
</dbReference>
<dbReference type="GO" id="GO:0048702">
    <property type="term" value="P:embryonic neurocranium morphogenesis"/>
    <property type="evidence" value="ECO:0007669"/>
    <property type="project" value="Ensembl"/>
</dbReference>
<dbReference type="GO" id="GO:0007492">
    <property type="term" value="P:endoderm development"/>
    <property type="evidence" value="ECO:0007669"/>
    <property type="project" value="Ensembl"/>
</dbReference>
<dbReference type="GO" id="GO:0007507">
    <property type="term" value="P:heart development"/>
    <property type="evidence" value="ECO:0007669"/>
    <property type="project" value="Ensembl"/>
</dbReference>
<dbReference type="GO" id="GO:0001843">
    <property type="term" value="P:neural tube closure"/>
    <property type="evidence" value="ECO:0007669"/>
    <property type="project" value="Ensembl"/>
</dbReference>
<dbReference type="GO" id="GO:0014003">
    <property type="term" value="P:oligodendrocyte development"/>
    <property type="evidence" value="ECO:0007669"/>
    <property type="project" value="Ensembl"/>
</dbReference>
<dbReference type="GO" id="GO:0045893">
    <property type="term" value="P:positive regulation of DNA-templated transcription"/>
    <property type="evidence" value="ECO:0000314"/>
    <property type="project" value="UniProtKB"/>
</dbReference>
<dbReference type="GO" id="GO:0045944">
    <property type="term" value="P:positive regulation of transcription by RNA polymerase II"/>
    <property type="evidence" value="ECO:0000314"/>
    <property type="project" value="MGI"/>
</dbReference>
<dbReference type="GO" id="GO:0060261">
    <property type="term" value="P:positive regulation of transcription initiation by RNA polymerase II"/>
    <property type="evidence" value="ECO:0000314"/>
    <property type="project" value="UniProtKB"/>
</dbReference>
<dbReference type="GO" id="GO:0036342">
    <property type="term" value="P:post-anal tail morphogenesis"/>
    <property type="evidence" value="ECO:0007669"/>
    <property type="project" value="Ensembl"/>
</dbReference>
<dbReference type="GO" id="GO:0016567">
    <property type="term" value="P:protein ubiquitination"/>
    <property type="evidence" value="ECO:0007669"/>
    <property type="project" value="Ensembl"/>
</dbReference>
<dbReference type="GO" id="GO:0014044">
    <property type="term" value="P:Schwann cell development"/>
    <property type="evidence" value="ECO:0007669"/>
    <property type="project" value="Ensembl"/>
</dbReference>
<dbReference type="GO" id="GO:0035019">
    <property type="term" value="P:somatic stem cell population maintenance"/>
    <property type="evidence" value="ECO:0007669"/>
    <property type="project" value="Ensembl"/>
</dbReference>
<dbReference type="GO" id="GO:0021510">
    <property type="term" value="P:spinal cord development"/>
    <property type="evidence" value="ECO:0007669"/>
    <property type="project" value="Ensembl"/>
</dbReference>
<dbReference type="GO" id="GO:0060071">
    <property type="term" value="P:Wnt signaling pathway, planar cell polarity pathway"/>
    <property type="evidence" value="ECO:0007669"/>
    <property type="project" value="Ensembl"/>
</dbReference>
<dbReference type="InterPro" id="IPR051647">
    <property type="entry name" value="Mediator_comp_sub12"/>
</dbReference>
<dbReference type="InterPro" id="IPR019035">
    <property type="entry name" value="Mediator_Med12"/>
</dbReference>
<dbReference type="InterPro" id="IPR021989">
    <property type="entry name" value="Mediator_Med12_catenin-bd"/>
</dbReference>
<dbReference type="InterPro" id="IPR021990">
    <property type="entry name" value="Mediator_Med12_LCEWAV"/>
</dbReference>
<dbReference type="PANTHER" id="PTHR46007">
    <property type="entry name" value="MEDIATOR OF RNA POLYMERASE II TRANSCRIPTION SUBUNIT 12"/>
    <property type="match status" value="1"/>
</dbReference>
<dbReference type="PANTHER" id="PTHR46007:SF2">
    <property type="entry name" value="MEDIATOR OF RNA POLYMERASE II TRANSCRIPTION SUBUNIT 12"/>
    <property type="match status" value="1"/>
</dbReference>
<dbReference type="Pfam" id="PF09497">
    <property type="entry name" value="Med12"/>
    <property type="match status" value="1"/>
</dbReference>
<dbReference type="Pfam" id="PF12145">
    <property type="entry name" value="Med12-LCEWAV"/>
    <property type="match status" value="1"/>
</dbReference>
<dbReference type="Pfam" id="PF12144">
    <property type="entry name" value="Med12-PQL"/>
    <property type="match status" value="1"/>
</dbReference>
<dbReference type="SMART" id="SM01281">
    <property type="entry name" value="Med12"/>
    <property type="match status" value="1"/>
</dbReference>
<keyword id="KW-0002">3D-structure</keyword>
<keyword id="KW-0007">Acetylation</keyword>
<keyword id="KW-0010">Activator</keyword>
<keyword id="KW-0025">Alternative splicing</keyword>
<keyword id="KW-0903">Direct protein sequencing</keyword>
<keyword id="KW-0225">Disease variant</keyword>
<keyword id="KW-0991">Intellectual disability</keyword>
<keyword id="KW-0488">Methylation</keyword>
<keyword id="KW-0539">Nucleus</keyword>
<keyword id="KW-0597">Phosphoprotein</keyword>
<keyword id="KW-1267">Proteomics identification</keyword>
<keyword id="KW-1185">Reference proteome</keyword>
<keyword id="KW-0678">Repressor</keyword>
<keyword id="KW-0804">Transcription</keyword>
<keyword id="KW-0805">Transcription regulation</keyword>